<protein>
    <recommendedName>
        <fullName evidence="1">UPF0060 membrane protein Sca_1835</fullName>
    </recommendedName>
</protein>
<evidence type="ECO:0000255" key="1">
    <source>
        <dbReference type="HAMAP-Rule" id="MF_00010"/>
    </source>
</evidence>
<comment type="subcellular location">
    <subcellularLocation>
        <location evidence="1">Cell membrane</location>
        <topology evidence="1">Multi-pass membrane protein</topology>
    </subcellularLocation>
</comment>
<comment type="similarity">
    <text evidence="1">Belongs to the UPF0060 family.</text>
</comment>
<accession>B9DLR8</accession>
<dbReference type="EMBL" id="AM295250">
    <property type="protein sequence ID" value="CAL28740.1"/>
    <property type="molecule type" value="Genomic_DNA"/>
</dbReference>
<dbReference type="RefSeq" id="WP_015901076.1">
    <property type="nucleotide sequence ID" value="NC_012121.1"/>
</dbReference>
<dbReference type="SMR" id="B9DLR8"/>
<dbReference type="KEGG" id="sca:SCA_1835"/>
<dbReference type="eggNOG" id="COG1742">
    <property type="taxonomic scope" value="Bacteria"/>
</dbReference>
<dbReference type="HOGENOM" id="CLU_117653_0_1_9"/>
<dbReference type="OrthoDB" id="123240at2"/>
<dbReference type="BioCyc" id="SCAR396513:SCA_RS09315-MONOMER"/>
<dbReference type="Proteomes" id="UP000000444">
    <property type="component" value="Chromosome"/>
</dbReference>
<dbReference type="GO" id="GO:0005886">
    <property type="term" value="C:plasma membrane"/>
    <property type="evidence" value="ECO:0007669"/>
    <property type="project" value="UniProtKB-SubCell"/>
</dbReference>
<dbReference type="Gene3D" id="1.10.3730.20">
    <property type="match status" value="1"/>
</dbReference>
<dbReference type="HAMAP" id="MF_00010">
    <property type="entry name" value="UPF0060"/>
    <property type="match status" value="1"/>
</dbReference>
<dbReference type="InterPro" id="IPR003844">
    <property type="entry name" value="UPF0060"/>
</dbReference>
<dbReference type="NCBIfam" id="NF002586">
    <property type="entry name" value="PRK02237.1"/>
    <property type="match status" value="1"/>
</dbReference>
<dbReference type="PANTHER" id="PTHR36116">
    <property type="entry name" value="UPF0060 MEMBRANE PROTEIN YNFA"/>
    <property type="match status" value="1"/>
</dbReference>
<dbReference type="PANTHER" id="PTHR36116:SF1">
    <property type="entry name" value="UPF0060 MEMBRANE PROTEIN YNFA"/>
    <property type="match status" value="1"/>
</dbReference>
<dbReference type="Pfam" id="PF02694">
    <property type="entry name" value="UPF0060"/>
    <property type="match status" value="1"/>
</dbReference>
<dbReference type="SUPFAM" id="SSF103481">
    <property type="entry name" value="Multidrug resistance efflux transporter EmrE"/>
    <property type="match status" value="1"/>
</dbReference>
<name>Y1835_STACT</name>
<organism>
    <name type="scientific">Staphylococcus carnosus (strain TM300)</name>
    <dbReference type="NCBI Taxonomy" id="396513"/>
    <lineage>
        <taxon>Bacteria</taxon>
        <taxon>Bacillati</taxon>
        <taxon>Bacillota</taxon>
        <taxon>Bacilli</taxon>
        <taxon>Bacillales</taxon>
        <taxon>Staphylococcaceae</taxon>
        <taxon>Staphylococcus</taxon>
    </lineage>
</organism>
<feature type="chain" id="PRO_1000197500" description="UPF0060 membrane protein Sca_1835">
    <location>
        <begin position="1"/>
        <end position="108"/>
    </location>
</feature>
<feature type="transmembrane region" description="Helical" evidence="1">
    <location>
        <begin position="5"/>
        <end position="25"/>
    </location>
</feature>
<feature type="transmembrane region" description="Helical" evidence="1">
    <location>
        <begin position="34"/>
        <end position="54"/>
    </location>
</feature>
<feature type="transmembrane region" description="Helical" evidence="1">
    <location>
        <begin position="60"/>
        <end position="80"/>
    </location>
</feature>
<feature type="transmembrane region" description="Helical" evidence="1">
    <location>
        <begin position="84"/>
        <end position="104"/>
    </location>
</feature>
<gene>
    <name type="ordered locus">Sca_1835</name>
</gene>
<reference key="1">
    <citation type="journal article" date="2009" name="Appl. Environ. Microbiol.">
        <title>Genome analysis of the meat starter culture bacterium Staphylococcus carnosus TM300.</title>
        <authorList>
            <person name="Rosenstein R."/>
            <person name="Nerz C."/>
            <person name="Biswas L."/>
            <person name="Resch A."/>
            <person name="Raddatz G."/>
            <person name="Schuster S.C."/>
            <person name="Goetz F."/>
        </authorList>
    </citation>
    <scope>NUCLEOTIDE SEQUENCE [LARGE SCALE GENOMIC DNA]</scope>
    <source>
        <strain>TM300</strain>
    </source>
</reference>
<keyword id="KW-1003">Cell membrane</keyword>
<keyword id="KW-0472">Membrane</keyword>
<keyword id="KW-1185">Reference proteome</keyword>
<keyword id="KW-0812">Transmembrane</keyword>
<keyword id="KW-1133">Transmembrane helix</keyword>
<proteinExistence type="inferred from homology"/>
<sequence length="108" mass="11927">MIYPILIFILAGLCEIGGGYLIWLWLRASQSPLFGLLGGILLISYGIVATFQVFPTFSRVYAAYGGVFIVMSILWGYVFDKQTPDKYDVLGAIVCIIGVLIMLLPDRS</sequence>